<reference key="1">
    <citation type="journal article" date="2013" name="Autophagy">
        <title>Ambra1 knockdown in zebrafish leads to incomplete development due to severe defects in organogenesis.</title>
        <authorList>
            <person name="Benato F."/>
            <person name="Skobo T."/>
            <person name="Gioacchini G."/>
            <person name="Moro I."/>
            <person name="Ciccosanti F."/>
            <person name="Piacentini M."/>
            <person name="Fimia G.M."/>
            <person name="Carnevali O."/>
            <person name="Dalla Valle L."/>
        </authorList>
    </citation>
    <scope>NUCLEOTIDE SEQUENCE [MRNA] (ISOFORMS 1; 2; 3 AND 4)</scope>
    <scope>FUNCTION</scope>
    <scope>DEVELOPMENTAL STAGE</scope>
    <scope>DISRUPTION PHENOTYPE</scope>
    <source>
        <tissue evidence="9">Embryo</tissue>
    </source>
</reference>
<reference key="2">
    <citation type="journal article" date="2013" name="Nature">
        <title>The zebrafish reference genome sequence and its relationship to the human genome.</title>
        <authorList>
            <person name="Howe K."/>
            <person name="Clark M.D."/>
            <person name="Torroja C.F."/>
            <person name="Torrance J."/>
            <person name="Berthelot C."/>
            <person name="Muffato M."/>
            <person name="Collins J.E."/>
            <person name="Humphray S."/>
            <person name="McLaren K."/>
            <person name="Matthews L."/>
            <person name="McLaren S."/>
            <person name="Sealy I."/>
            <person name="Caccamo M."/>
            <person name="Churcher C."/>
            <person name="Scott C."/>
            <person name="Barrett J.C."/>
            <person name="Koch R."/>
            <person name="Rauch G.J."/>
            <person name="White S."/>
            <person name="Chow W."/>
            <person name="Kilian B."/>
            <person name="Quintais L.T."/>
            <person name="Guerra-Assuncao J.A."/>
            <person name="Zhou Y."/>
            <person name="Gu Y."/>
            <person name="Yen J."/>
            <person name="Vogel J.H."/>
            <person name="Eyre T."/>
            <person name="Redmond S."/>
            <person name="Banerjee R."/>
            <person name="Chi J."/>
            <person name="Fu B."/>
            <person name="Langley E."/>
            <person name="Maguire S.F."/>
            <person name="Laird G.K."/>
            <person name="Lloyd D."/>
            <person name="Kenyon E."/>
            <person name="Donaldson S."/>
            <person name="Sehra H."/>
            <person name="Almeida-King J."/>
            <person name="Loveland J."/>
            <person name="Trevanion S."/>
            <person name="Jones M."/>
            <person name="Quail M."/>
            <person name="Willey D."/>
            <person name="Hunt A."/>
            <person name="Burton J."/>
            <person name="Sims S."/>
            <person name="McLay K."/>
            <person name="Plumb B."/>
            <person name="Davis J."/>
            <person name="Clee C."/>
            <person name="Oliver K."/>
            <person name="Clark R."/>
            <person name="Riddle C."/>
            <person name="Elliot D."/>
            <person name="Threadgold G."/>
            <person name="Harden G."/>
            <person name="Ware D."/>
            <person name="Begum S."/>
            <person name="Mortimore B."/>
            <person name="Kerry G."/>
            <person name="Heath P."/>
            <person name="Phillimore B."/>
            <person name="Tracey A."/>
            <person name="Corby N."/>
            <person name="Dunn M."/>
            <person name="Johnson C."/>
            <person name="Wood J."/>
            <person name="Clark S."/>
            <person name="Pelan S."/>
            <person name="Griffiths G."/>
            <person name="Smith M."/>
            <person name="Glithero R."/>
            <person name="Howden P."/>
            <person name="Barker N."/>
            <person name="Lloyd C."/>
            <person name="Stevens C."/>
            <person name="Harley J."/>
            <person name="Holt K."/>
            <person name="Panagiotidis G."/>
            <person name="Lovell J."/>
            <person name="Beasley H."/>
            <person name="Henderson C."/>
            <person name="Gordon D."/>
            <person name="Auger K."/>
            <person name="Wright D."/>
            <person name="Collins J."/>
            <person name="Raisen C."/>
            <person name="Dyer L."/>
            <person name="Leung K."/>
            <person name="Robertson L."/>
            <person name="Ambridge K."/>
            <person name="Leongamornlert D."/>
            <person name="McGuire S."/>
            <person name="Gilderthorp R."/>
            <person name="Griffiths C."/>
            <person name="Manthravadi D."/>
            <person name="Nichol S."/>
            <person name="Barker G."/>
            <person name="Whitehead S."/>
            <person name="Kay M."/>
            <person name="Brown J."/>
            <person name="Murnane C."/>
            <person name="Gray E."/>
            <person name="Humphries M."/>
            <person name="Sycamore N."/>
            <person name="Barker D."/>
            <person name="Saunders D."/>
            <person name="Wallis J."/>
            <person name="Babbage A."/>
            <person name="Hammond S."/>
            <person name="Mashreghi-Mohammadi M."/>
            <person name="Barr L."/>
            <person name="Martin S."/>
            <person name="Wray P."/>
            <person name="Ellington A."/>
            <person name="Matthews N."/>
            <person name="Ellwood M."/>
            <person name="Woodmansey R."/>
            <person name="Clark G."/>
            <person name="Cooper J."/>
            <person name="Tromans A."/>
            <person name="Grafham D."/>
            <person name="Skuce C."/>
            <person name="Pandian R."/>
            <person name="Andrews R."/>
            <person name="Harrison E."/>
            <person name="Kimberley A."/>
            <person name="Garnett J."/>
            <person name="Fosker N."/>
            <person name="Hall R."/>
            <person name="Garner P."/>
            <person name="Kelly D."/>
            <person name="Bird C."/>
            <person name="Palmer S."/>
            <person name="Gehring I."/>
            <person name="Berger A."/>
            <person name="Dooley C.M."/>
            <person name="Ersan-Urun Z."/>
            <person name="Eser C."/>
            <person name="Geiger H."/>
            <person name="Geisler M."/>
            <person name="Karotki L."/>
            <person name="Kirn A."/>
            <person name="Konantz J."/>
            <person name="Konantz M."/>
            <person name="Oberlander M."/>
            <person name="Rudolph-Geiger S."/>
            <person name="Teucke M."/>
            <person name="Lanz C."/>
            <person name="Raddatz G."/>
            <person name="Osoegawa K."/>
            <person name="Zhu B."/>
            <person name="Rapp A."/>
            <person name="Widaa S."/>
            <person name="Langford C."/>
            <person name="Yang F."/>
            <person name="Schuster S.C."/>
            <person name="Carter N.P."/>
            <person name="Harrow J."/>
            <person name="Ning Z."/>
            <person name="Herrero J."/>
            <person name="Searle S.M."/>
            <person name="Enright A."/>
            <person name="Geisler R."/>
            <person name="Plasterk R.H."/>
            <person name="Lee C."/>
            <person name="Westerfield M."/>
            <person name="de Jong P.J."/>
            <person name="Zon L.I."/>
            <person name="Postlethwait J.H."/>
            <person name="Nusslein-Volhard C."/>
            <person name="Hubbard T.J."/>
            <person name="Roest Crollius H."/>
            <person name="Rogers J."/>
            <person name="Stemple D.L."/>
        </authorList>
    </citation>
    <scope>NUCLEOTIDE SEQUENCE [LARGE SCALE GENOMIC DNA]</scope>
    <source>
        <strain>Tuebingen</strain>
    </source>
</reference>
<reference key="3">
    <citation type="journal article" date="2014" name="PLoS ONE">
        <title>Zebrafish ambra1a and ambra1b knockdown impairs skeletal muscle development.</title>
        <authorList>
            <person name="Skobo T."/>
            <person name="Benato F."/>
            <person name="Grumati P."/>
            <person name="Meneghetti G."/>
            <person name="Cianfanelli V."/>
            <person name="Castagnaro S."/>
            <person name="Chrisam M."/>
            <person name="Di Bartolomeo S."/>
            <person name="Bonaldo P."/>
            <person name="Cecconi F."/>
            <person name="Dalla Valle L."/>
        </authorList>
    </citation>
    <scope>FUNCTION</scope>
    <scope>DISRUPTION PHENOTYPE</scope>
</reference>
<protein>
    <recommendedName>
        <fullName evidence="7">Activating molecule in BECN1-regulated autophagy protein 1A</fullName>
    </recommendedName>
</protein>
<evidence type="ECO:0000250" key="1">
    <source>
        <dbReference type="UniProtKB" id="A2AH22"/>
    </source>
</evidence>
<evidence type="ECO:0000250" key="2">
    <source>
        <dbReference type="UniProtKB" id="Q9C0C7"/>
    </source>
</evidence>
<evidence type="ECO:0000255" key="3"/>
<evidence type="ECO:0000256" key="4">
    <source>
        <dbReference type="SAM" id="MobiDB-lite"/>
    </source>
</evidence>
<evidence type="ECO:0000269" key="5">
    <source>
    </source>
</evidence>
<evidence type="ECO:0000269" key="6">
    <source>
    </source>
</evidence>
<evidence type="ECO:0000303" key="7">
    <source>
    </source>
</evidence>
<evidence type="ECO:0000305" key="8"/>
<evidence type="ECO:0000312" key="9">
    <source>
        <dbReference type="EMBL" id="CCE04070.1"/>
    </source>
</evidence>
<evidence type="ECO:0000312" key="10">
    <source>
        <dbReference type="ZFIN" id="ZDB-GENE-111104-2"/>
    </source>
</evidence>
<feature type="chain" id="PRO_0000453463" description="Activating molecule in BECN1-regulated autophagy protein 1A">
    <location>
        <begin position="1"/>
        <end position="1315"/>
    </location>
</feature>
<feature type="repeat" description="WD 1" evidence="3">
    <location>
        <begin position="50"/>
        <end position="89"/>
    </location>
</feature>
<feature type="repeat" description="WD 2" evidence="3">
    <location>
        <begin position="92"/>
        <end position="132"/>
    </location>
</feature>
<feature type="repeat" description="WD 3" evidence="3">
    <location>
        <begin position="134"/>
        <end position="174"/>
    </location>
</feature>
<feature type="region of interest" description="Disordered" evidence="4">
    <location>
        <begin position="294"/>
        <end position="322"/>
    </location>
</feature>
<feature type="region of interest" description="Disordered" evidence="4">
    <location>
        <begin position="342"/>
        <end position="409"/>
    </location>
</feature>
<feature type="region of interest" description="Disordered" evidence="4">
    <location>
        <begin position="426"/>
        <end position="463"/>
    </location>
</feature>
<feature type="region of interest" description="Disordered" evidence="4">
    <location>
        <begin position="502"/>
        <end position="526"/>
    </location>
</feature>
<feature type="region of interest" description="Disordered" evidence="4">
    <location>
        <begin position="545"/>
        <end position="610"/>
    </location>
</feature>
<feature type="region of interest" description="Disordered" evidence="4">
    <location>
        <begin position="630"/>
        <end position="660"/>
    </location>
</feature>
<feature type="region of interest" description="Disordered" evidence="4">
    <location>
        <begin position="681"/>
        <end position="736"/>
    </location>
</feature>
<feature type="region of interest" description="Disordered" evidence="4">
    <location>
        <begin position="985"/>
        <end position="1134"/>
    </location>
</feature>
<feature type="region of interest" description="Disordered" evidence="4">
    <location>
        <begin position="1181"/>
        <end position="1208"/>
    </location>
</feature>
<feature type="region of interest" description="Disordered" evidence="4">
    <location>
        <begin position="1286"/>
        <end position="1315"/>
    </location>
</feature>
<feature type="short sequence motif" description="TQT motif 1" evidence="2">
    <location>
        <begin position="1053"/>
        <end position="1055"/>
    </location>
</feature>
<feature type="short sequence motif" description="TQT motif 2" evidence="2">
    <location>
        <begin position="1065"/>
        <end position="1067"/>
    </location>
</feature>
<feature type="compositionally biased region" description="Polar residues" evidence="4">
    <location>
        <begin position="351"/>
        <end position="360"/>
    </location>
</feature>
<feature type="compositionally biased region" description="Basic and acidic residues" evidence="4">
    <location>
        <begin position="378"/>
        <end position="388"/>
    </location>
</feature>
<feature type="compositionally biased region" description="Polar residues" evidence="4">
    <location>
        <begin position="394"/>
        <end position="409"/>
    </location>
</feature>
<feature type="compositionally biased region" description="Polar residues" evidence="4">
    <location>
        <begin position="426"/>
        <end position="435"/>
    </location>
</feature>
<feature type="compositionally biased region" description="Polar residues" evidence="4">
    <location>
        <begin position="552"/>
        <end position="581"/>
    </location>
</feature>
<feature type="compositionally biased region" description="Polar residues" evidence="4">
    <location>
        <begin position="633"/>
        <end position="647"/>
    </location>
</feature>
<feature type="compositionally biased region" description="Low complexity" evidence="4">
    <location>
        <begin position="696"/>
        <end position="715"/>
    </location>
</feature>
<feature type="compositionally biased region" description="Acidic residues" evidence="4">
    <location>
        <begin position="716"/>
        <end position="725"/>
    </location>
</feature>
<feature type="compositionally biased region" description="Low complexity" evidence="4">
    <location>
        <begin position="1009"/>
        <end position="1021"/>
    </location>
</feature>
<feature type="compositionally biased region" description="Basic and acidic residues" evidence="4">
    <location>
        <begin position="1022"/>
        <end position="1031"/>
    </location>
</feature>
<feature type="compositionally biased region" description="Polar residues" evidence="4">
    <location>
        <begin position="1047"/>
        <end position="1060"/>
    </location>
</feature>
<feature type="compositionally biased region" description="Basic and acidic residues" evidence="4">
    <location>
        <begin position="1061"/>
        <end position="1072"/>
    </location>
</feature>
<feature type="compositionally biased region" description="Polar residues" evidence="4">
    <location>
        <begin position="1076"/>
        <end position="1090"/>
    </location>
</feature>
<feature type="compositionally biased region" description="Acidic residues" evidence="4">
    <location>
        <begin position="1091"/>
        <end position="1103"/>
    </location>
</feature>
<feature type="compositionally biased region" description="Polar residues" evidence="4">
    <location>
        <begin position="1125"/>
        <end position="1134"/>
    </location>
</feature>
<feature type="compositionally biased region" description="Polar residues" evidence="4">
    <location>
        <begin position="1181"/>
        <end position="1193"/>
    </location>
</feature>
<feature type="compositionally biased region" description="Low complexity" evidence="4">
    <location>
        <begin position="1286"/>
        <end position="1307"/>
    </location>
</feature>
<feature type="splice variant" id="VSP_061152" description="In isoform 2.">
    <location>
        <begin position="725"/>
        <end position="1315"/>
    </location>
</feature>
<feature type="splice variant" id="VSP_061153" description="In isoform 4.">
    <original>AVIG</original>
    <variation>MFAL</variation>
    <location>
        <begin position="785"/>
        <end position="788"/>
    </location>
</feature>
<feature type="splice variant" id="VSP_061154" description="In isoform 4.">
    <location>
        <begin position="789"/>
        <end position="1315"/>
    </location>
</feature>
<feature type="splice variant" id="VSP_061155" description="In isoform 3.">
    <original>ATESLDFETL</original>
    <variation>GKTLSVNQIL</variation>
    <location>
        <begin position="1089"/>
        <end position="1098"/>
    </location>
</feature>
<feature type="splice variant" id="VSP_061156" description="In isoform 3.">
    <location>
        <begin position="1099"/>
        <end position="1315"/>
    </location>
</feature>
<feature type="sequence conflict" description="In Ref. 1; CCA61108." evidence="8" ref="1">
    <original>G</original>
    <variation>E</variation>
    <location>
        <position position="727"/>
    </location>
</feature>
<proteinExistence type="evidence at transcript level"/>
<dbReference type="EMBL" id="HE602022">
    <property type="protein sequence ID" value="CCE04070.1"/>
    <property type="molecule type" value="mRNA"/>
</dbReference>
<dbReference type="EMBL" id="HE602023">
    <property type="protein sequence ID" value="CCE04071.1"/>
    <property type="molecule type" value="mRNA"/>
</dbReference>
<dbReference type="EMBL" id="HE602024">
    <property type="protein sequence ID" value="CCE04072.1"/>
    <property type="molecule type" value="mRNA"/>
</dbReference>
<dbReference type="EMBL" id="FR846231">
    <property type="protein sequence ID" value="CCA61108.2"/>
    <property type="molecule type" value="mRNA"/>
</dbReference>
<dbReference type="EMBL" id="CABZ01117708">
    <property type="status" value="NOT_ANNOTATED_CDS"/>
    <property type="molecule type" value="Genomic_DNA"/>
</dbReference>
<dbReference type="EMBL" id="CABZ01117709">
    <property type="status" value="NOT_ANNOTATED_CDS"/>
    <property type="molecule type" value="Genomic_DNA"/>
</dbReference>
<dbReference type="EMBL" id="CABZ01117710">
    <property type="status" value="NOT_ANNOTATED_CDS"/>
    <property type="molecule type" value="Genomic_DNA"/>
</dbReference>
<dbReference type="EMBL" id="FP103011">
    <property type="status" value="NOT_ANNOTATED_CDS"/>
    <property type="molecule type" value="Genomic_DNA"/>
</dbReference>
<dbReference type="EMBL" id="LO018322">
    <property type="status" value="NOT_ANNOTATED_CDS"/>
    <property type="molecule type" value="Genomic_DNA"/>
</dbReference>
<dbReference type="RefSeq" id="NP_001268921.1">
    <molecule id="E7FAG6-1"/>
    <property type="nucleotide sequence ID" value="NM_001281992.1"/>
</dbReference>
<dbReference type="SMR" id="E7FAG6"/>
<dbReference type="FunCoup" id="E7FAG6">
    <property type="interactions" value="184"/>
</dbReference>
<dbReference type="STRING" id="7955.ENSDARP00000088806"/>
<dbReference type="PaxDb" id="7955-ENSDARP00000088806"/>
<dbReference type="Ensembl" id="ENSDART00000098033">
    <molecule id="E7FAG6-1"/>
    <property type="protein sequence ID" value="ENSDARP00000088806"/>
    <property type="gene ID" value="ENSDARG00000008322"/>
</dbReference>
<dbReference type="GeneID" id="100332642"/>
<dbReference type="KEGG" id="dre:100332642"/>
<dbReference type="AGR" id="ZFIN:ZDB-GENE-111104-2"/>
<dbReference type="CTD" id="100332642"/>
<dbReference type="ZFIN" id="ZDB-GENE-111104-2">
    <property type="gene designation" value="ambra1a"/>
</dbReference>
<dbReference type="eggNOG" id="KOG0266">
    <property type="taxonomic scope" value="Eukaryota"/>
</dbReference>
<dbReference type="HOGENOM" id="CLU_008882_0_0_1"/>
<dbReference type="InParanoid" id="E7FAG6"/>
<dbReference type="OMA" id="DHPREMA"/>
<dbReference type="OrthoDB" id="6363363at2759"/>
<dbReference type="TreeFam" id="TF328981"/>
<dbReference type="UniPathway" id="UPA00143"/>
<dbReference type="PRO" id="PR:E7FAG6"/>
<dbReference type="Proteomes" id="UP000000437">
    <property type="component" value="Chromosome 7"/>
</dbReference>
<dbReference type="Bgee" id="ENSDARG00000008322">
    <property type="expression patterns" value="Expressed in early embryo and 27 other cell types or tissues"/>
</dbReference>
<dbReference type="ExpressionAtlas" id="E7FAG6">
    <property type="expression patterns" value="baseline and differential"/>
</dbReference>
<dbReference type="GO" id="GO:0005776">
    <property type="term" value="C:autophagosome"/>
    <property type="evidence" value="ECO:0007669"/>
    <property type="project" value="UniProtKB-SubCell"/>
</dbReference>
<dbReference type="GO" id="GO:0080008">
    <property type="term" value="C:Cul4-RING E3 ubiquitin ligase complex"/>
    <property type="evidence" value="ECO:0000250"/>
    <property type="project" value="UniProtKB"/>
</dbReference>
<dbReference type="GO" id="GO:0031410">
    <property type="term" value="C:cytoplasmic vesicle"/>
    <property type="evidence" value="ECO:0007669"/>
    <property type="project" value="UniProtKB-KW"/>
</dbReference>
<dbReference type="GO" id="GO:0005856">
    <property type="term" value="C:cytoskeleton"/>
    <property type="evidence" value="ECO:0007669"/>
    <property type="project" value="UniProtKB-SubCell"/>
</dbReference>
<dbReference type="GO" id="GO:0005829">
    <property type="term" value="C:cytosol"/>
    <property type="evidence" value="ECO:0007669"/>
    <property type="project" value="UniProtKB-SubCell"/>
</dbReference>
<dbReference type="GO" id="GO:0005783">
    <property type="term" value="C:endoplasmic reticulum"/>
    <property type="evidence" value="ECO:0007669"/>
    <property type="project" value="UniProtKB-SubCell"/>
</dbReference>
<dbReference type="GO" id="GO:0005925">
    <property type="term" value="C:focal adhesion"/>
    <property type="evidence" value="ECO:0007669"/>
    <property type="project" value="UniProtKB-SubCell"/>
</dbReference>
<dbReference type="GO" id="GO:0043231">
    <property type="term" value="C:intracellular membrane-bounded organelle"/>
    <property type="evidence" value="ECO:0000318"/>
    <property type="project" value="GO_Central"/>
</dbReference>
<dbReference type="GO" id="GO:0005739">
    <property type="term" value="C:mitochondrion"/>
    <property type="evidence" value="ECO:0007669"/>
    <property type="project" value="UniProtKB-SubCell"/>
</dbReference>
<dbReference type="GO" id="GO:0005634">
    <property type="term" value="C:nucleus"/>
    <property type="evidence" value="ECO:0000250"/>
    <property type="project" value="UniProtKB"/>
</dbReference>
<dbReference type="GO" id="GO:0072542">
    <property type="term" value="F:protein phosphatase activator activity"/>
    <property type="evidence" value="ECO:0000250"/>
    <property type="project" value="UniProtKB"/>
</dbReference>
<dbReference type="GO" id="GO:1990756">
    <property type="term" value="F:ubiquitin-like ligase-substrate adaptor activity"/>
    <property type="evidence" value="ECO:0000250"/>
    <property type="project" value="UniProtKB"/>
</dbReference>
<dbReference type="GO" id="GO:0000045">
    <property type="term" value="P:autophagosome assembly"/>
    <property type="evidence" value="ECO:0000250"/>
    <property type="project" value="UniProtKB"/>
</dbReference>
<dbReference type="GO" id="GO:0006914">
    <property type="term" value="P:autophagy"/>
    <property type="evidence" value="ECO:0000315"/>
    <property type="project" value="ZFIN"/>
</dbReference>
<dbReference type="GO" id="GO:0043009">
    <property type="term" value="P:chordate embryonic development"/>
    <property type="evidence" value="ECO:0000315"/>
    <property type="project" value="ZFIN"/>
</dbReference>
<dbReference type="GO" id="GO:0008406">
    <property type="term" value="P:gonad development"/>
    <property type="evidence" value="ECO:0000315"/>
    <property type="project" value="ZFIN"/>
</dbReference>
<dbReference type="GO" id="GO:0007626">
    <property type="term" value="P:locomotory behavior"/>
    <property type="evidence" value="ECO:0000315"/>
    <property type="project" value="ZFIN"/>
</dbReference>
<dbReference type="GO" id="GO:0000423">
    <property type="term" value="P:mitophagy"/>
    <property type="evidence" value="ECO:0000318"/>
    <property type="project" value="GO_Central"/>
</dbReference>
<dbReference type="GO" id="GO:1904544">
    <property type="term" value="P:positive regulation of free ubiquitin chain polymerization"/>
    <property type="evidence" value="ECO:0000250"/>
    <property type="project" value="UniProtKB"/>
</dbReference>
<dbReference type="GO" id="GO:1901526">
    <property type="term" value="P:positive regulation of mitophagy"/>
    <property type="evidence" value="ECO:0000250"/>
    <property type="project" value="UniProtKB"/>
</dbReference>
<dbReference type="GO" id="GO:0045591">
    <property type="term" value="P:positive regulation of regulatory T cell differentiation"/>
    <property type="evidence" value="ECO:0000250"/>
    <property type="project" value="UniProtKB"/>
</dbReference>
<dbReference type="GO" id="GO:0000209">
    <property type="term" value="P:protein polyubiquitination"/>
    <property type="evidence" value="ECO:0000250"/>
    <property type="project" value="UniProtKB"/>
</dbReference>
<dbReference type="GO" id="GO:2000045">
    <property type="term" value="P:regulation of G1/S transition of mitotic cell cycle"/>
    <property type="evidence" value="ECO:0000250"/>
    <property type="project" value="UniProtKB"/>
</dbReference>
<dbReference type="GO" id="GO:0048741">
    <property type="term" value="P:skeletal muscle fiber development"/>
    <property type="evidence" value="ECO:0000315"/>
    <property type="project" value="ZFIN"/>
</dbReference>
<dbReference type="FunFam" id="2.130.10.10:FF:000361">
    <property type="entry name" value="Activating molecule in beclin-1-regulated autophagy"/>
    <property type="match status" value="1"/>
</dbReference>
<dbReference type="Gene3D" id="2.130.10.10">
    <property type="entry name" value="YVTN repeat-like/Quinoprotein amine dehydrogenase"/>
    <property type="match status" value="1"/>
</dbReference>
<dbReference type="InterPro" id="IPR052596">
    <property type="entry name" value="AMBRA1_autophagy"/>
</dbReference>
<dbReference type="InterPro" id="IPR015943">
    <property type="entry name" value="WD40/YVTN_repeat-like_dom_sf"/>
</dbReference>
<dbReference type="InterPro" id="IPR019775">
    <property type="entry name" value="WD40_repeat_CS"/>
</dbReference>
<dbReference type="InterPro" id="IPR036322">
    <property type="entry name" value="WD40_repeat_dom_sf"/>
</dbReference>
<dbReference type="InterPro" id="IPR001680">
    <property type="entry name" value="WD40_rpt"/>
</dbReference>
<dbReference type="PANTHER" id="PTHR22874">
    <property type="entry name" value="ACTIVATING MOLECULE IN BECN1-REGULATED AUTOPHAGY PROTEIN 1"/>
    <property type="match status" value="1"/>
</dbReference>
<dbReference type="PANTHER" id="PTHR22874:SF1">
    <property type="entry name" value="ACTIVATING MOLECULE IN BECN1-REGULATED AUTOPHAGY PROTEIN 1"/>
    <property type="match status" value="1"/>
</dbReference>
<dbReference type="Pfam" id="PF00400">
    <property type="entry name" value="WD40"/>
    <property type="match status" value="1"/>
</dbReference>
<dbReference type="SMART" id="SM00320">
    <property type="entry name" value="WD40"/>
    <property type="match status" value="3"/>
</dbReference>
<dbReference type="SUPFAM" id="SSF82171">
    <property type="entry name" value="DPP6 N-terminal domain-like"/>
    <property type="match status" value="1"/>
</dbReference>
<dbReference type="SUPFAM" id="SSF50978">
    <property type="entry name" value="WD40 repeat-like"/>
    <property type="match status" value="1"/>
</dbReference>
<dbReference type="PROSITE" id="PS00678">
    <property type="entry name" value="WD_REPEATS_1"/>
    <property type="match status" value="1"/>
</dbReference>
<dbReference type="PROSITE" id="PS50082">
    <property type="entry name" value="WD_REPEATS_2"/>
    <property type="match status" value="1"/>
</dbReference>
<dbReference type="PROSITE" id="PS50294">
    <property type="entry name" value="WD_REPEATS_REGION"/>
    <property type="match status" value="1"/>
</dbReference>
<sequence length="1315" mass="144049">MKLGQRNSVCILSSRERGAPGLASYRVLQQLVEEKTQRMKWQSQKVELPDSPRSTFLLAFSPDRSLMASTHVNHNIYITEVKSGKCVHSLVGHRRTPWCLTFHPIIPGLIASGCLDGEVRIWDLHGGSESWLTESNSAIASLAFHPTAQLLLIATNNEVHLWDWSRKEPFTVVKTASETERVRLVRFDPLGHYLLTAIVNPSNQPNDDDPEIPMDSVEMPHLRQRSFLQSQPARRTPILHNFLHILTSRNSVPQAGGAHSASTDGSSDSSGPYTLMCVQPLGMVCFCSRCSAARVPSPPDEDPSDSASLEAQAHTFSSARTEPLQMSRFSVESRAANRSSAFSSVYGGGSNMRNHSSSSGRRGVTGMAPVPHFRQHPPGREGGGRHPGADWTVSGLNGQSSSMTPQRTGASSVSLLSVLRQQETSFQSPVYTSASDRWGSTPGTSSSRHRPPEEEGQSSSSSIHSVLRCNLYRYFMDYEGTQDTVQPLDGSRQDQQTQEMLNNNMDPEQPGPSHYQSPYSGENPPHSHMNRCRVCHNLFTYNQGSRRWDRTGQPSSTERNTPWQPSSSAFHSVAPVSQSNEHLLEHRPIESTPNTPEPHVPFSQRTDTGQHEEQAVGLVFNQETGQLERVYRQSASSRSANISQGALNQEMPEDTPDNDYLRRLSPAAYYAQRMIQYLSRRDSVRQHSHRPPSRPRPLSSNPSSLSPSPVPNAESSEVDFEEFEENGSRYRTPRNARMSAPSLGRFVGTRRFLLPEFLPYAGIFHERGQPGLATHSSVNRVLAGAVIGDGQSAVASNIANTTYRLQWWDFTKFDLPEISNASVNVLVPNCKIYNDASCDISADGQLLAVFIPSSQRGFPDEGILAVYSLAPHNLGEMLYSKRFGPNAISVSLSPMGRYVMVGLASRRILLHQISDHMVAQVFRLQQPHAGETSMRRVFDVVYPMAPDQRRHVSINSARWLPDPGLGLAYGTNKGDLVICRPVDVHSDGSSTSEHSERMFTINNGGGVGPSSSRSGDRAGSSRTDRRSRRDIGLMNGVGLQPQPPAASVTSQGTQTQNQRLQHAETQTDRDLPDDPQQPSTSQGSQVTDATESLDFETLPEDSGSEVVPETPPHSRPQEDEGSDPSEPSTDSTGQAEYVSRIRRLMAEGGMTAVVQREQSTTMASMGSFGNNIIVSHRIHRGSQTGADAQNRTRLSPIPGPSSGAPESLAAASYSRVLTNTLGFRGDTAQGIDLTEQERLHTSFFTPEFSPLFSSAVDATGPSSSIGADSVLEGEDFHDFASLPPSLLSSSPSLSPVNNSNYSNSDSSYLGDEYGR</sequence>
<accession>E7FAG6</accession>
<accession>A0A1D5NSZ3</accession>
<accession>I3IRN2</accession>
<accession>L0N9D3</accession>
<accession>L0N9D4</accession>
<accession>L0N9K3</accession>
<gene>
    <name evidence="7 10" type="primary">ambra1a</name>
</gene>
<organism>
    <name type="scientific">Danio rerio</name>
    <name type="common">Zebrafish</name>
    <name type="synonym">Brachydanio rerio</name>
    <dbReference type="NCBI Taxonomy" id="7955"/>
    <lineage>
        <taxon>Eukaryota</taxon>
        <taxon>Metazoa</taxon>
        <taxon>Chordata</taxon>
        <taxon>Craniata</taxon>
        <taxon>Vertebrata</taxon>
        <taxon>Euteleostomi</taxon>
        <taxon>Actinopterygii</taxon>
        <taxon>Neopterygii</taxon>
        <taxon>Teleostei</taxon>
        <taxon>Ostariophysi</taxon>
        <taxon>Cypriniformes</taxon>
        <taxon>Danionidae</taxon>
        <taxon>Danioninae</taxon>
        <taxon>Danio</taxon>
    </lineage>
</organism>
<name>AMR1A_DANRE</name>
<keyword id="KW-0025">Alternative splicing</keyword>
<keyword id="KW-0072">Autophagy</keyword>
<keyword id="KW-0131">Cell cycle</keyword>
<keyword id="KW-0965">Cell junction</keyword>
<keyword id="KW-0963">Cytoplasm</keyword>
<keyword id="KW-0968">Cytoplasmic vesicle</keyword>
<keyword id="KW-0206">Cytoskeleton</keyword>
<keyword id="KW-0256">Endoplasmic reticulum</keyword>
<keyword id="KW-0496">Mitochondrion</keyword>
<keyword id="KW-0539">Nucleus</keyword>
<keyword id="KW-1185">Reference proteome</keyword>
<keyword id="KW-0677">Repeat</keyword>
<keyword id="KW-0833">Ubl conjugation pathway</keyword>
<keyword id="KW-0853">WD repeat</keyword>
<comment type="function">
    <text evidence="1 2 5 6">Substrate-recognition component of a DCX (DDB1-CUL4-X-box) E3 ubiquitin-protein ligase complex involved in cell cycle control and autophagy (PubMed:23348054). The DCX(AMBRA1) complex specifically mediates the polyubiquitination of target proteins (By similarity). Acts as an upstream master regulator of the transition from G1 to S cell phase: ambra1a specifically recognizes and binds phosphorylated cyclin-D (ccnd1, ccnd2 and ccnd3), leading to cyclin-D ubiquitination by the DCX(AMBRA1) complex and subsequent degradation (By similarity). Acts as a regulator of Cul5-RING (CRL5) E3 ubiquitin-protein ligase complexes by mediating ubiquitination and degradation of Elongin-C (eloc) component of CRL5 complexes (By similarity). Acts as a key regulator of autophagy by modulating the BECN1-PIK3C3 complex: controls protein turnover during neuronal development, and regulates normal cell survival and proliferation (By similarity). In normal conditions, ambra1a is tethered to the cytoskeleton via interaction with dyneins light chains (By similarity). Upon autophagy induction, ambra1a is released from the cytoskeletal docking site to induce autophagosome nucleation by mediating ubiquitination of proteins involved in autophagy (By similarity). Also acts as an activator of mitophagy (By similarity). Required for skeletal muscle development (PubMed:24922546).</text>
</comment>
<comment type="pathway">
    <text evidence="2">Protein modification; protein ubiquitination.</text>
</comment>
<comment type="subunit">
    <text evidence="2">Component of the DCX(AMBRA1) E3 ubiquitin ligase complex.</text>
</comment>
<comment type="subcellular location">
    <subcellularLocation>
        <location evidence="2">Endoplasmic reticulum</location>
    </subcellularLocation>
    <subcellularLocation>
        <location evidence="2">Cytoplasm</location>
        <location evidence="2">Cytoskeleton</location>
    </subcellularLocation>
    <subcellularLocation>
        <location evidence="1">Cytoplasmic vesicle</location>
        <location evidence="1">Autophagosome</location>
    </subcellularLocation>
    <subcellularLocation>
        <location evidence="2">Mitochondrion</location>
    </subcellularLocation>
    <subcellularLocation>
        <location evidence="1">Cytoplasm</location>
        <location evidence="1">Cytosol</location>
    </subcellularLocation>
    <subcellularLocation>
        <location evidence="2">Nucleus</location>
    </subcellularLocation>
    <subcellularLocation>
        <location evidence="1">Cell junction</location>
        <location evidence="1">Focal adhesion</location>
    </subcellularLocation>
    <text evidence="2">Localizes to the cytoskeleton in absence of autophagy induction. Upon autophagy induction, ambra1a relocalizes to the endoplasmic reticulum to enable autophagosome nucleation. Partially localizes at mitochondria in normal conditions.</text>
</comment>
<comment type="alternative products">
    <event type="alternative splicing"/>
    <isoform>
        <id>E7FAG6-1</id>
        <name>1</name>
        <name evidence="7">ambra1a1</name>
        <sequence type="displayed"/>
    </isoform>
    <isoform>
        <id>E7FAG6-2</id>
        <name>2</name>
        <name evidence="7">ambra1a4</name>
        <sequence type="described" ref="VSP_061152"/>
    </isoform>
    <isoform>
        <id>E7FAG6-3</id>
        <name>3</name>
        <name evidence="7">ambra1a2</name>
        <sequence type="described" ref="VSP_061155 VSP_061156"/>
    </isoform>
    <isoform>
        <id>E7FAG6-4</id>
        <name>4</name>
        <name evidence="7">ambra1a3</name>
        <sequence type="described" ref="VSP_061153 VSP_061154"/>
    </isoform>
</comment>
<comment type="developmental stage">
    <text evidence="5">Expressed both maternally and zygotically. Present as maternal transcripts in the eggs and display a gradual decline until 8 hours post-fertilization (hpf), being replaced by zygotic mRNAs from 12 hpf onwards (PubMed:23348054). After 24 hpf, the transcripts are mainly localized in the brain and otic vesicles (PubMed:23348054).</text>
</comment>
<comment type="disruption phenotype">
    <text evidence="5 6">Morpholino knockdown of ambra1a causes impaired dorso-ventral patterning in embryos (PubMed:23348054). Morpholino knockdown of ambra1a and ambra1b results in reduced autophagy and increased apoptosis during embryogenesis (PubMed:23348054). Morpholino knockdown of ambra1a and ambra1b results in impaired locomotion, caused by abnormal myogenesis (PubMed:24922546).</text>
</comment>
<comment type="similarity">
    <text evidence="8">Belongs to the WD repeat AMBRA1 family.</text>
</comment>